<organism>
    <name type="scientific">Methanococcus maripaludis (strain DSM 14266 / JCM 13030 / NBRC 101832 / S2 / LL)</name>
    <dbReference type="NCBI Taxonomy" id="267377"/>
    <lineage>
        <taxon>Archaea</taxon>
        <taxon>Methanobacteriati</taxon>
        <taxon>Methanobacteriota</taxon>
        <taxon>Methanomada group</taxon>
        <taxon>Methanococci</taxon>
        <taxon>Methanococcales</taxon>
        <taxon>Methanococcaceae</taxon>
        <taxon>Methanococcus</taxon>
    </lineage>
</organism>
<sequence>MAEPVIMAFVCYQUGYGAADLAGTSRMQYPASVRAIRVPCTGKFDITYALRAFQKGADAVFVAGUKPNECAFETGNFKAEERVKFGKQILDELGIGGERLEMFFMSGADAGKFTEAVKEMTDRVKKLGPNPIKA</sequence>
<keyword id="KW-0001">2Fe-2S</keyword>
<keyword id="KW-0249">Electron transport</keyword>
<keyword id="KW-0408">Iron</keyword>
<keyword id="KW-0411">Iron-sulfur</keyword>
<keyword id="KW-0479">Metal-binding</keyword>
<keyword id="KW-0560">Oxidoreductase</keyword>
<keyword id="KW-1185">Reference proteome</keyword>
<keyword id="KW-0712">Selenocysteine</keyword>
<keyword id="KW-0813">Transport</keyword>
<gene>
    <name type="primary">vhuD</name>
    <name type="ordered locus">MMP1696</name>
</gene>
<name>VHUD_METMP</name>
<proteinExistence type="inferred from homology"/>
<reference key="1">
    <citation type="journal article" date="2001" name="Mol. Microbiol.">
        <title>Heterologous expression of archaeal selenoprotein genes directed by the SECIS element located in the 3' non-translated region.</title>
        <authorList>
            <person name="Rother M."/>
            <person name="Resch A."/>
            <person name="Gardner W.L."/>
            <person name="Whitman W.B."/>
            <person name="Boeck A."/>
        </authorList>
    </citation>
    <scope>NUCLEOTIDE SEQUENCE [GENOMIC DNA]</scope>
    <scope>SELENOCYSTEINE AT SEC-14 AND SEC-65</scope>
</reference>
<reference key="2">
    <citation type="journal article" date="2004" name="J. Bacteriol.">
        <title>Complete genome sequence of the genetically tractable hydrogenotrophic methanogen Methanococcus maripaludis.</title>
        <authorList>
            <person name="Hendrickson E.L."/>
            <person name="Kaul R."/>
            <person name="Zhou Y."/>
            <person name="Bovee D."/>
            <person name="Chapman P."/>
            <person name="Chung J."/>
            <person name="Conway de Macario E."/>
            <person name="Dodsworth J.A."/>
            <person name="Gillett W."/>
            <person name="Graham D.E."/>
            <person name="Hackett M."/>
            <person name="Haydock A.K."/>
            <person name="Kang A."/>
            <person name="Land M.L."/>
            <person name="Levy R."/>
            <person name="Lie T.J."/>
            <person name="Major T.A."/>
            <person name="Moore B.C."/>
            <person name="Porat I."/>
            <person name="Palmeiri A."/>
            <person name="Rouse G."/>
            <person name="Saenphimmachak C."/>
            <person name="Soell D."/>
            <person name="Van Dien S."/>
            <person name="Wang T."/>
            <person name="Whitman W.B."/>
            <person name="Xia Q."/>
            <person name="Zhang Y."/>
            <person name="Larimer F.W."/>
            <person name="Olson M.V."/>
            <person name="Leigh J.A."/>
        </authorList>
    </citation>
    <scope>NUCLEOTIDE SEQUENCE [LARGE SCALE GENOMIC DNA]</scope>
    <source>
        <strain>DSM 14266 / JCM 13030 / NBRC 101832 / S2 / LL</strain>
    </source>
</reference>
<feature type="chain" id="PRO_0000249591" description="F420-non-reducing hydrogenase vhu iron-sulfur subunit D">
    <location>
        <begin position="1"/>
        <end position="134"/>
    </location>
</feature>
<feature type="non-standard amino acid" description="Selenocysteine">
    <location>
        <position position="14"/>
    </location>
</feature>
<feature type="non-standard amino acid" description="Selenocysteine">
    <location>
        <position position="65"/>
    </location>
</feature>
<evidence type="ECO:0000250" key="1"/>
<evidence type="ECO:0000305" key="2"/>
<dbReference type="EC" id="1.12.99.-"/>
<dbReference type="EMBL" id="AF324438">
    <property type="protein sequence ID" value="AAG38636.1"/>
    <property type="molecule type" value="Genomic_DNA"/>
</dbReference>
<dbReference type="EMBL" id="BX950229">
    <property type="protein sequence ID" value="CAF31252.1"/>
    <property type="molecule type" value="Genomic_DNA"/>
</dbReference>
<dbReference type="RefSeq" id="WP_011171640.1">
    <property type="nucleotide sequence ID" value="NC_005791.1"/>
</dbReference>
<dbReference type="STRING" id="267377.MMP1696"/>
<dbReference type="GeneID" id="2762635"/>
<dbReference type="KEGG" id="mmp:MMP1696"/>
<dbReference type="PATRIC" id="fig|267377.15.peg.1737"/>
<dbReference type="eggNOG" id="arCOG02475">
    <property type="taxonomic scope" value="Archaea"/>
</dbReference>
<dbReference type="HOGENOM" id="CLU_095272_2_0_2"/>
<dbReference type="OrthoDB" id="371828at2157"/>
<dbReference type="BRENDA" id="1.12.98.1">
    <property type="organism ID" value="3262"/>
</dbReference>
<dbReference type="Proteomes" id="UP000000590">
    <property type="component" value="Chromosome"/>
</dbReference>
<dbReference type="GO" id="GO:0051537">
    <property type="term" value="F:2 iron, 2 sulfur cluster binding"/>
    <property type="evidence" value="ECO:0007669"/>
    <property type="project" value="UniProtKB-KW"/>
</dbReference>
<dbReference type="GO" id="GO:0046872">
    <property type="term" value="F:metal ion binding"/>
    <property type="evidence" value="ECO:0007669"/>
    <property type="project" value="UniProtKB-KW"/>
</dbReference>
<dbReference type="GO" id="GO:0016491">
    <property type="term" value="F:oxidoreductase activity"/>
    <property type="evidence" value="ECO:0007669"/>
    <property type="project" value="UniProtKB-KW"/>
</dbReference>
<dbReference type="InterPro" id="IPR003813">
    <property type="entry name" value="MvhD/FlpD"/>
</dbReference>
<dbReference type="NCBIfam" id="NF045873">
    <property type="entry name" value="F420_non_VhuD"/>
    <property type="match status" value="1"/>
</dbReference>
<dbReference type="Pfam" id="PF02662">
    <property type="entry name" value="FlpD"/>
    <property type="match status" value="1"/>
</dbReference>
<comment type="cofactor">
    <cofactor evidence="1">
        <name>[2Fe-2S] cluster</name>
        <dbReference type="ChEBI" id="CHEBI:190135"/>
    </cofactor>
    <text evidence="1">Binds 1 [2Fe-2S] cluster.</text>
</comment>
<comment type="subunit">
    <text evidence="1">The F420-non-reducing hydrogenase vhu is composed of four subunits; VhuA, VhuD, VhuG and VhuU.</text>
</comment>
<comment type="similarity">
    <text evidence="2">Belongs to the MvhD/VhuD family.</text>
</comment>
<accession>Q6LWL3</accession>
<accession>Q9HH13</accession>
<protein>
    <recommendedName>
        <fullName>F420-non-reducing hydrogenase vhu iron-sulfur subunit D</fullName>
        <ecNumber>1.12.99.-</ecNumber>
    </recommendedName>
</protein>